<dbReference type="EMBL" id="DQ489736">
    <property type="protein sequence ID" value="ACA83346.1"/>
    <property type="molecule type" value="Genomic_DNA"/>
</dbReference>
<dbReference type="RefSeq" id="WP_004906858.1">
    <property type="nucleotide sequence ID" value="NC_010471.1"/>
</dbReference>
<dbReference type="SMR" id="B1MVU2"/>
<dbReference type="STRING" id="349519.LCK_01522"/>
<dbReference type="KEGG" id="lci:LCK_01522"/>
<dbReference type="eggNOG" id="COG0244">
    <property type="taxonomic scope" value="Bacteria"/>
</dbReference>
<dbReference type="HOGENOM" id="CLU_092227_2_0_9"/>
<dbReference type="OrthoDB" id="9808307at2"/>
<dbReference type="Proteomes" id="UP000002166">
    <property type="component" value="Chromosome"/>
</dbReference>
<dbReference type="GO" id="GO:1990904">
    <property type="term" value="C:ribonucleoprotein complex"/>
    <property type="evidence" value="ECO:0007669"/>
    <property type="project" value="UniProtKB-KW"/>
</dbReference>
<dbReference type="GO" id="GO:0005840">
    <property type="term" value="C:ribosome"/>
    <property type="evidence" value="ECO:0007669"/>
    <property type="project" value="UniProtKB-KW"/>
</dbReference>
<dbReference type="GO" id="GO:0070180">
    <property type="term" value="F:large ribosomal subunit rRNA binding"/>
    <property type="evidence" value="ECO:0007669"/>
    <property type="project" value="UniProtKB-UniRule"/>
</dbReference>
<dbReference type="GO" id="GO:0006412">
    <property type="term" value="P:translation"/>
    <property type="evidence" value="ECO:0007669"/>
    <property type="project" value="UniProtKB-UniRule"/>
</dbReference>
<dbReference type="CDD" id="cd05797">
    <property type="entry name" value="Ribosomal_L10"/>
    <property type="match status" value="1"/>
</dbReference>
<dbReference type="Gene3D" id="3.30.70.1730">
    <property type="match status" value="1"/>
</dbReference>
<dbReference type="HAMAP" id="MF_00362">
    <property type="entry name" value="Ribosomal_uL10"/>
    <property type="match status" value="1"/>
</dbReference>
<dbReference type="InterPro" id="IPR001790">
    <property type="entry name" value="Ribosomal_uL10"/>
</dbReference>
<dbReference type="InterPro" id="IPR043141">
    <property type="entry name" value="Ribosomal_uL10-like_sf"/>
</dbReference>
<dbReference type="InterPro" id="IPR022973">
    <property type="entry name" value="Ribosomal_uL10_bac"/>
</dbReference>
<dbReference type="InterPro" id="IPR047865">
    <property type="entry name" value="Ribosomal_uL10_bac_type"/>
</dbReference>
<dbReference type="NCBIfam" id="NF000955">
    <property type="entry name" value="PRK00099.1-1"/>
    <property type="match status" value="1"/>
</dbReference>
<dbReference type="PANTHER" id="PTHR11560">
    <property type="entry name" value="39S RIBOSOMAL PROTEIN L10, MITOCHONDRIAL"/>
    <property type="match status" value="1"/>
</dbReference>
<dbReference type="Pfam" id="PF00466">
    <property type="entry name" value="Ribosomal_L10"/>
    <property type="match status" value="1"/>
</dbReference>
<dbReference type="SUPFAM" id="SSF160369">
    <property type="entry name" value="Ribosomal protein L10-like"/>
    <property type="match status" value="1"/>
</dbReference>
<accession>B1MVU2</accession>
<feature type="chain" id="PRO_1000120983" description="Large ribosomal subunit protein uL10">
    <location>
        <begin position="1"/>
        <end position="176"/>
    </location>
</feature>
<gene>
    <name evidence="1" type="primary">rplJ</name>
    <name type="ordered locus">LCK_01522</name>
</gene>
<evidence type="ECO:0000255" key="1">
    <source>
        <dbReference type="HAMAP-Rule" id="MF_00362"/>
    </source>
</evidence>
<evidence type="ECO:0000305" key="2"/>
<reference key="1">
    <citation type="journal article" date="2008" name="J. Bacteriol.">
        <title>Complete genome sequence of Leuconostoc citreum KM20.</title>
        <authorList>
            <person name="Kim J.F."/>
            <person name="Jeong H."/>
            <person name="Lee J.-S."/>
            <person name="Choi S.-H."/>
            <person name="Ha M."/>
            <person name="Hur C.-G."/>
            <person name="Kim J.-S."/>
            <person name="Lee S."/>
            <person name="Park H.-S."/>
            <person name="Park Y.-H."/>
            <person name="Oh T.K."/>
        </authorList>
    </citation>
    <scope>NUCLEOTIDE SEQUENCE [LARGE SCALE GENOMIC DNA]</scope>
    <source>
        <strain>KM20</strain>
    </source>
</reference>
<organism>
    <name type="scientific">Leuconostoc citreum (strain KM20)</name>
    <dbReference type="NCBI Taxonomy" id="349519"/>
    <lineage>
        <taxon>Bacteria</taxon>
        <taxon>Bacillati</taxon>
        <taxon>Bacillota</taxon>
        <taxon>Bacilli</taxon>
        <taxon>Lactobacillales</taxon>
        <taxon>Lactobacillaceae</taxon>
        <taxon>Leuconostoc</taxon>
    </lineage>
</organism>
<sequence length="176" mass="18894">MSEKTIAIKAQKVEEIADQFKNAASAVVVDARGLTVAQSTELRHQLREEGIVLEVIKNKILTRAAEKAGFAELNDIFAGPSAVAFSNDDAVAPSRILKKFADANEKLEIKGGVVDGTIANIEDINKYASLPSREGLLGQLMAEFQFSIRSFAYAVKAVQDKLEEGGEAAEEALAAE</sequence>
<protein>
    <recommendedName>
        <fullName evidence="1">Large ribosomal subunit protein uL10</fullName>
    </recommendedName>
    <alternativeName>
        <fullName evidence="2">50S ribosomal protein L10</fullName>
    </alternativeName>
</protein>
<keyword id="KW-1185">Reference proteome</keyword>
<keyword id="KW-0687">Ribonucleoprotein</keyword>
<keyword id="KW-0689">Ribosomal protein</keyword>
<keyword id="KW-0694">RNA-binding</keyword>
<keyword id="KW-0699">rRNA-binding</keyword>
<name>RL10_LEUCK</name>
<comment type="function">
    <text evidence="1">Forms part of the ribosomal stalk, playing a central role in the interaction of the ribosome with GTP-bound translation factors.</text>
</comment>
<comment type="subunit">
    <text evidence="1">Part of the ribosomal stalk of the 50S ribosomal subunit. The N-terminus interacts with L11 and the large rRNA to form the base of the stalk. The C-terminus forms an elongated spine to which L12 dimers bind in a sequential fashion forming a multimeric L10(L12)X complex.</text>
</comment>
<comment type="similarity">
    <text evidence="1">Belongs to the universal ribosomal protein uL10 family.</text>
</comment>
<proteinExistence type="inferred from homology"/>